<geneLocation type="chloroplast"/>
<dbReference type="EMBL" id="AF022186">
    <property type="protein sequence ID" value="AAF13016.1"/>
    <property type="molecule type" value="Genomic_DNA"/>
</dbReference>
<dbReference type="RefSeq" id="NP_045029.1">
    <property type="nucleotide sequence ID" value="NC_001840.1"/>
</dbReference>
<dbReference type="SMR" id="Q9TM37"/>
<dbReference type="GeneID" id="800194"/>
<dbReference type="GO" id="GO:0009507">
    <property type="term" value="C:chloroplast"/>
    <property type="evidence" value="ECO:0007669"/>
    <property type="project" value="UniProtKB-SubCell"/>
</dbReference>
<dbReference type="GO" id="GO:0005829">
    <property type="term" value="C:cytosol"/>
    <property type="evidence" value="ECO:0007669"/>
    <property type="project" value="TreeGrafter"/>
</dbReference>
<dbReference type="GO" id="GO:0005524">
    <property type="term" value="F:ATP binding"/>
    <property type="evidence" value="ECO:0007669"/>
    <property type="project" value="TreeGrafter"/>
</dbReference>
<dbReference type="GO" id="GO:0030234">
    <property type="term" value="F:enzyme regulator activity"/>
    <property type="evidence" value="ECO:0007669"/>
    <property type="project" value="InterPro"/>
</dbReference>
<dbReference type="GO" id="GO:0006808">
    <property type="term" value="P:regulation of nitrogen utilization"/>
    <property type="evidence" value="ECO:0007669"/>
    <property type="project" value="InterPro"/>
</dbReference>
<dbReference type="Gene3D" id="3.30.70.120">
    <property type="match status" value="1"/>
</dbReference>
<dbReference type="InterPro" id="IPR002187">
    <property type="entry name" value="N-reg_PII"/>
</dbReference>
<dbReference type="InterPro" id="IPR011322">
    <property type="entry name" value="N-reg_PII-like_a/b"/>
</dbReference>
<dbReference type="InterPro" id="IPR015867">
    <property type="entry name" value="N-reg_PII/ATP_PRibTrfase_C"/>
</dbReference>
<dbReference type="InterPro" id="IPR017918">
    <property type="entry name" value="N-reg_PII_CS"/>
</dbReference>
<dbReference type="PANTHER" id="PTHR30115">
    <property type="entry name" value="NITROGEN REGULATORY PROTEIN P-II"/>
    <property type="match status" value="1"/>
</dbReference>
<dbReference type="PANTHER" id="PTHR30115:SF11">
    <property type="entry name" value="NITROGEN REGULATORY PROTEIN P-II HOMOLOG"/>
    <property type="match status" value="1"/>
</dbReference>
<dbReference type="Pfam" id="PF00543">
    <property type="entry name" value="P-II"/>
    <property type="match status" value="1"/>
</dbReference>
<dbReference type="PRINTS" id="PR00340">
    <property type="entry name" value="PIIGLNB"/>
</dbReference>
<dbReference type="SMART" id="SM00938">
    <property type="entry name" value="P-II"/>
    <property type="match status" value="1"/>
</dbReference>
<dbReference type="SUPFAM" id="SSF54913">
    <property type="entry name" value="GlnB-like"/>
    <property type="match status" value="1"/>
</dbReference>
<dbReference type="PROSITE" id="PS00638">
    <property type="entry name" value="PII_GLNB_CTER"/>
    <property type="match status" value="1"/>
</dbReference>
<dbReference type="PROSITE" id="PS51343">
    <property type="entry name" value="PII_GLNB_DOM"/>
    <property type="match status" value="1"/>
</dbReference>
<evidence type="ECO:0000250" key="1"/>
<evidence type="ECO:0000255" key="2">
    <source>
        <dbReference type="PROSITE-ProRule" id="PRU00675"/>
    </source>
</evidence>
<gene>
    <name type="primary">glnB</name>
</gene>
<name>GLNB_CYACA</name>
<organism>
    <name type="scientific">Cyanidium caldarium</name>
    <name type="common">Red alga</name>
    <dbReference type="NCBI Taxonomy" id="2771"/>
    <lineage>
        <taxon>Eukaryota</taxon>
        <taxon>Rhodophyta</taxon>
        <taxon>Bangiophyceae</taxon>
        <taxon>Cyanidiales</taxon>
        <taxon>Cyanidiaceae</taxon>
        <taxon>Cyanidium</taxon>
    </lineage>
</organism>
<proteinExistence type="inferred from homology"/>
<accession>Q9TM37</accession>
<feature type="chain" id="PRO_0000139798" description="Nitrogen regulatory protein P-II">
    <location>
        <begin position="1"/>
        <end position="113"/>
    </location>
</feature>
<feature type="modified residue" description="O-UMP-tyrosine" evidence="2">
    <location>
        <position position="52"/>
    </location>
</feature>
<keyword id="KW-0150">Chloroplast</keyword>
<keyword id="KW-0547">Nucleotide-binding</keyword>
<keyword id="KW-0597">Phosphoprotein</keyword>
<keyword id="KW-0934">Plastid</keyword>
<keyword id="KW-0804">Transcription</keyword>
<keyword id="KW-0805">Transcription regulation</keyword>
<comment type="function">
    <text evidence="1">P-II indirectly controls the transcription of the glutamine synthetase gene (glnA). P-II prevents NR-II-catalyzed conversion of NR-I to NR-I-phosphate, the transcriptional activator of glnA. When P-II is uridylylated to P-II-UMP, these events are reversed. When the ratio of Gln to 2-ketoglutarate decreases, P-II is uridylylated to P-II-UMP, which causes the deadenylation of glutamine synthetase, so activating the enzyme (By similarity).</text>
</comment>
<comment type="subunit">
    <text evidence="1">Homotrimer.</text>
</comment>
<comment type="subcellular location">
    <subcellularLocation>
        <location>Plastid</location>
        <location>Chloroplast</location>
    </subcellularLocation>
</comment>
<comment type="similarity">
    <text evidence="2">Belongs to the P(II) protein family.</text>
</comment>
<reference key="1">
    <citation type="journal article" date="2000" name="J. Mol. Evol.">
        <title>The structure and gene repertoire of an ancient red algal plastid genome.</title>
        <authorList>
            <person name="Gloeckner G."/>
            <person name="Rosenthal A."/>
            <person name="Valentin K.-U."/>
        </authorList>
    </citation>
    <scope>NUCLEOTIDE SEQUENCE [LARGE SCALE GENOMIC DNA]</scope>
    <source>
        <strain>RK-1</strain>
    </source>
</reference>
<sequence>MFSKLEAIIRPFKLEEVKVRLMTFGVPGITVTNVMGCGKQIGGIERSKGVEYDSELIEKVKIEIVVMNEHIDELIEIIINAVWTGEIGDGKIFVSPVSSVIRIRTQDKDLDAI</sequence>
<protein>
    <recommendedName>
        <fullName>Nitrogen regulatory protein P-II</fullName>
    </recommendedName>
</protein>